<proteinExistence type="evidence at protein level"/>
<protein>
    <recommendedName>
        <fullName>Aldehyde dehydrogenase gamma chain</fullName>
        <shortName>ALDH</shortName>
        <ecNumber>1.2.5.2</ecNumber>
    </recommendedName>
</protein>
<sequence length="24" mass="2585">MNVQFTVNGRAASIDVPPNTLLVQ</sequence>
<comment type="catalytic activity">
    <reaction>
        <text>an aldehyde + a quinone + H2O = a quinol + a carboxylate + H(+)</text>
        <dbReference type="Rhea" id="RHEA:13881"/>
        <dbReference type="ChEBI" id="CHEBI:15377"/>
        <dbReference type="ChEBI" id="CHEBI:15378"/>
        <dbReference type="ChEBI" id="CHEBI:17478"/>
        <dbReference type="ChEBI" id="CHEBI:24646"/>
        <dbReference type="ChEBI" id="CHEBI:29067"/>
        <dbReference type="ChEBI" id="CHEBI:132124"/>
        <dbReference type="EC" id="1.2.5.2"/>
    </reaction>
</comment>
<comment type="cofactor">
    <cofactor evidence="1">
        <name>[2Fe-2S] cluster</name>
        <dbReference type="ChEBI" id="CHEBI:190135"/>
    </cofactor>
    <text evidence="1">Binds 2 [2Fe-2S] clusters per subunit.</text>
</comment>
<comment type="subunit">
    <text>Heterotrimer composed of an alpha, a beta and a gamma chain.</text>
</comment>
<name>DHAG_COMTE</name>
<reference key="1">
    <citation type="submission" date="1996-07" db="UniProtKB">
        <authorList>
            <person name="Luykx D.M.A.M."/>
            <person name="Kim S.W."/>
            <person name="de Vries S."/>
            <person name="Duine J.A."/>
        </authorList>
    </citation>
    <scope>PROTEIN SEQUENCE</scope>
    <source>
        <strain>ATCC 15667 / CCUG 14479 / IAM 12408 / JCM 13048 / LMG 7106 / NCIMB 9682 / 2168</strain>
    </source>
</reference>
<keyword id="KW-0001">2Fe-2S</keyword>
<keyword id="KW-0903">Direct protein sequencing</keyword>
<keyword id="KW-0408">Iron</keyword>
<keyword id="KW-0411">Iron-sulfur</keyword>
<keyword id="KW-0479">Metal-binding</keyword>
<keyword id="KW-0560">Oxidoreductase</keyword>
<organism>
    <name type="scientific">Comamonas testosteroni</name>
    <name type="common">Pseudomonas testosteroni</name>
    <dbReference type="NCBI Taxonomy" id="285"/>
    <lineage>
        <taxon>Bacteria</taxon>
        <taxon>Pseudomonadati</taxon>
        <taxon>Pseudomonadota</taxon>
        <taxon>Betaproteobacteria</taxon>
        <taxon>Burkholderiales</taxon>
        <taxon>Comamonadaceae</taxon>
        <taxon>Comamonas</taxon>
    </lineage>
</organism>
<dbReference type="EC" id="1.2.5.2"/>
<dbReference type="GO" id="GO:0051537">
    <property type="term" value="F:2 iron, 2 sulfur cluster binding"/>
    <property type="evidence" value="ECO:0007669"/>
    <property type="project" value="UniProtKB-KW"/>
</dbReference>
<dbReference type="GO" id="GO:0047113">
    <property type="term" value="F:aldehyde dehydrogenase (quinone) activity"/>
    <property type="evidence" value="ECO:0007669"/>
    <property type="project" value="UniProtKB-EC"/>
</dbReference>
<dbReference type="GO" id="GO:0046872">
    <property type="term" value="F:metal ion binding"/>
    <property type="evidence" value="ECO:0007669"/>
    <property type="project" value="UniProtKB-KW"/>
</dbReference>
<feature type="chain" id="PRO_0000063247" description="Aldehyde dehydrogenase gamma chain">
    <location>
        <begin position="1"/>
        <end position="24" status="greater than"/>
    </location>
</feature>
<feature type="non-terminal residue">
    <location>
        <position position="24"/>
    </location>
</feature>
<evidence type="ECO:0000250" key="1"/>
<accession>P80705</accession>